<reference key="1">
    <citation type="journal article" date="2005" name="Nature">
        <title>Genomic sequence of the pathogenic and allergenic filamentous fungus Aspergillus fumigatus.</title>
        <authorList>
            <person name="Nierman W.C."/>
            <person name="Pain A."/>
            <person name="Anderson M.J."/>
            <person name="Wortman J.R."/>
            <person name="Kim H.S."/>
            <person name="Arroyo J."/>
            <person name="Berriman M."/>
            <person name="Abe K."/>
            <person name="Archer D.B."/>
            <person name="Bermejo C."/>
            <person name="Bennett J.W."/>
            <person name="Bowyer P."/>
            <person name="Chen D."/>
            <person name="Collins M."/>
            <person name="Coulsen R."/>
            <person name="Davies R."/>
            <person name="Dyer P.S."/>
            <person name="Farman M.L."/>
            <person name="Fedorova N."/>
            <person name="Fedorova N.D."/>
            <person name="Feldblyum T.V."/>
            <person name="Fischer R."/>
            <person name="Fosker N."/>
            <person name="Fraser A."/>
            <person name="Garcia J.L."/>
            <person name="Garcia M.J."/>
            <person name="Goble A."/>
            <person name="Goldman G.H."/>
            <person name="Gomi K."/>
            <person name="Griffith-Jones S."/>
            <person name="Gwilliam R."/>
            <person name="Haas B.J."/>
            <person name="Haas H."/>
            <person name="Harris D.E."/>
            <person name="Horiuchi H."/>
            <person name="Huang J."/>
            <person name="Humphray S."/>
            <person name="Jimenez J."/>
            <person name="Keller N."/>
            <person name="Khouri H."/>
            <person name="Kitamoto K."/>
            <person name="Kobayashi T."/>
            <person name="Konzack S."/>
            <person name="Kulkarni R."/>
            <person name="Kumagai T."/>
            <person name="Lafton A."/>
            <person name="Latge J.-P."/>
            <person name="Li W."/>
            <person name="Lord A."/>
            <person name="Lu C."/>
            <person name="Majoros W.H."/>
            <person name="May G.S."/>
            <person name="Miller B.L."/>
            <person name="Mohamoud Y."/>
            <person name="Molina M."/>
            <person name="Monod M."/>
            <person name="Mouyna I."/>
            <person name="Mulligan S."/>
            <person name="Murphy L.D."/>
            <person name="O'Neil S."/>
            <person name="Paulsen I."/>
            <person name="Penalva M.A."/>
            <person name="Pertea M."/>
            <person name="Price C."/>
            <person name="Pritchard B.L."/>
            <person name="Quail M.A."/>
            <person name="Rabbinowitsch E."/>
            <person name="Rawlins N."/>
            <person name="Rajandream M.A."/>
            <person name="Reichard U."/>
            <person name="Renauld H."/>
            <person name="Robson G.D."/>
            <person name="Rodriguez de Cordoba S."/>
            <person name="Rodriguez-Pena J.M."/>
            <person name="Ronning C.M."/>
            <person name="Rutter S."/>
            <person name="Salzberg S.L."/>
            <person name="Sanchez M."/>
            <person name="Sanchez-Ferrero J.C."/>
            <person name="Saunders D."/>
            <person name="Seeger K."/>
            <person name="Squares R."/>
            <person name="Squares S."/>
            <person name="Takeuchi M."/>
            <person name="Tekaia F."/>
            <person name="Turner G."/>
            <person name="Vazquez de Aldana C.R."/>
            <person name="Weidman J."/>
            <person name="White O."/>
            <person name="Woodward J.R."/>
            <person name="Yu J.-H."/>
            <person name="Fraser C.M."/>
            <person name="Galagan J.E."/>
            <person name="Asai K."/>
            <person name="Machida M."/>
            <person name="Hall N."/>
            <person name="Barrell B.G."/>
            <person name="Denning D.W."/>
        </authorList>
    </citation>
    <scope>NUCLEOTIDE SEQUENCE [LARGE SCALE GENOMIC DNA]</scope>
    <source>
        <strain>ATCC MYA-4609 / CBS 101355 / FGSC A1100 / Af293</strain>
    </source>
</reference>
<name>XKS1_ASPFU</name>
<comment type="function">
    <text evidence="1">Highly specific D-xylulose kinase which participates in the catabolism of xylose. Xylose is a major component of hemicelluloses such as xylan. Most fungi utilize D-xylose via three enzymatic reactions, xylose reductase (XR), xylitol dehydrogenase (XDH), and xylulokinase, to form xylulose 5-phosphate, which enters pentose phosphate pathway (By similarity).</text>
</comment>
<comment type="catalytic activity">
    <reaction>
        <text>D-xylulose + ATP = D-xylulose 5-phosphate + ADP + H(+)</text>
        <dbReference type="Rhea" id="RHEA:10964"/>
        <dbReference type="ChEBI" id="CHEBI:15378"/>
        <dbReference type="ChEBI" id="CHEBI:17140"/>
        <dbReference type="ChEBI" id="CHEBI:30616"/>
        <dbReference type="ChEBI" id="CHEBI:57737"/>
        <dbReference type="ChEBI" id="CHEBI:456216"/>
        <dbReference type="EC" id="2.7.1.17"/>
    </reaction>
</comment>
<comment type="subcellular location">
    <subcellularLocation>
        <location evidence="1">Cytoplasm</location>
    </subcellularLocation>
</comment>
<comment type="induction">
    <text>By D-xylose, L-arabinose or L-arabitol.</text>
</comment>
<comment type="similarity">
    <text evidence="2">Belongs to the FGGY kinase family.</text>
</comment>
<evidence type="ECO:0000250" key="1"/>
<evidence type="ECO:0000305" key="2"/>
<accession>Q4WUV8</accession>
<organism>
    <name type="scientific">Aspergillus fumigatus (strain ATCC MYA-4609 / CBS 101355 / FGSC A1100 / Af293)</name>
    <name type="common">Neosartorya fumigata</name>
    <dbReference type="NCBI Taxonomy" id="330879"/>
    <lineage>
        <taxon>Eukaryota</taxon>
        <taxon>Fungi</taxon>
        <taxon>Dikarya</taxon>
        <taxon>Ascomycota</taxon>
        <taxon>Pezizomycotina</taxon>
        <taxon>Eurotiomycetes</taxon>
        <taxon>Eurotiomycetidae</taxon>
        <taxon>Eurotiales</taxon>
        <taxon>Aspergillaceae</taxon>
        <taxon>Aspergillus</taxon>
        <taxon>Aspergillus subgen. Fumigati</taxon>
    </lineage>
</organism>
<sequence length="573" mass="62940">MTSQGPLYIGFDLSTQQLKGLVVNSELKVVHISKFDFDADSHGFSIKKGVLTNEAEHEVFAPVALWLQALDGVLNGLRKQGLDFSRVKGISGAGQQHGSVYWGENAESLLKSLDSSKSLEEQLSGAFSHPFSPNWQDASTQKECDEFDAFLGGPEQLAEATGSKAHHRFTGPQILRMQRKYPEVYKKTARISLVSSFLASLLLGHIAPMDISDVCGMNLWDIKKGAYNEKLLGLCAGPFGVEDLKRKLGAVPEDGGLRLGKINRYFVERYGFSSDCEILPSTGDNPATILALPLRPSDAMVSLGTSTTFLMSTPNYKPDPATHFFNHPTTPGLYMFMLCYKNGGLAREHVRDAINEKSGSGASQSWESFDKIMLETPPMGQKTESGPMKMGLFFPRPEIVPNVRSGQWRFTYDPASDALTETEDGWNTPSDEARAIVESQMLSLRLRSRGLTQSPGDGLPPQPRRVYLVGGGSKNKAIAKVAGEILGGSDGVYKLDVGDNACALGAAYKAVWAIERKPGQTFEDLIGQRWREEEFIEKIADGYQKGVFEKYGKAVEGFEKMEQQVLKQEAARK</sequence>
<proteinExistence type="evidence at transcript level"/>
<feature type="chain" id="PRO_0000393519" description="Probable D-xylulose kinase A">
    <location>
        <begin position="1"/>
        <end position="573"/>
    </location>
</feature>
<feature type="binding site" evidence="1">
    <location>
        <position position="97"/>
    </location>
    <ligand>
        <name>substrate</name>
    </ligand>
</feature>
<feature type="binding site" evidence="1">
    <location>
        <position position="168"/>
    </location>
    <ligand>
        <name>substrate</name>
    </ligand>
</feature>
<feature type="binding site" evidence="1">
    <location>
        <position position="284"/>
    </location>
    <ligand>
        <name>substrate</name>
    </ligand>
</feature>
<feature type="binding site" evidence="1">
    <location>
        <position position="285"/>
    </location>
    <ligand>
        <name>substrate</name>
    </ligand>
</feature>
<feature type="binding site" evidence="1">
    <location>
        <position position="366"/>
    </location>
    <ligand>
        <name>ATP</name>
        <dbReference type="ChEBI" id="CHEBI:30616"/>
    </ligand>
</feature>
<feature type="binding site" evidence="1">
    <location>
        <begin position="471"/>
        <end position="472"/>
    </location>
    <ligand>
        <name>ATP</name>
        <dbReference type="ChEBI" id="CHEBI:30616"/>
    </ligand>
</feature>
<feature type="binding site" evidence="1">
    <location>
        <position position="475"/>
    </location>
    <ligand>
        <name>ATP</name>
        <dbReference type="ChEBI" id="CHEBI:30616"/>
    </ligand>
</feature>
<dbReference type="EC" id="2.7.1.17"/>
<dbReference type="EMBL" id="AAHF01000003">
    <property type="protein sequence ID" value="EAL91618.1"/>
    <property type="molecule type" value="Genomic_DNA"/>
</dbReference>
<dbReference type="RefSeq" id="XP_753656.1">
    <property type="nucleotide sequence ID" value="XM_748563.1"/>
</dbReference>
<dbReference type="SMR" id="Q4WUV8"/>
<dbReference type="FunCoup" id="Q4WUV8">
    <property type="interactions" value="505"/>
</dbReference>
<dbReference type="STRING" id="330879.Q4WUV8"/>
<dbReference type="EnsemblFungi" id="EAL91618">
    <property type="protein sequence ID" value="EAL91618"/>
    <property type="gene ID" value="AFUA_5G09840"/>
</dbReference>
<dbReference type="GeneID" id="3511272"/>
<dbReference type="KEGG" id="afm:AFUA_5G09840"/>
<dbReference type="VEuPathDB" id="FungiDB:Afu5g09840"/>
<dbReference type="eggNOG" id="KOG2531">
    <property type="taxonomic scope" value="Eukaryota"/>
</dbReference>
<dbReference type="HOGENOM" id="CLU_016149_5_0_1"/>
<dbReference type="InParanoid" id="Q4WUV8"/>
<dbReference type="OMA" id="NSCALGG"/>
<dbReference type="OrthoDB" id="1728974at2759"/>
<dbReference type="Proteomes" id="UP000002530">
    <property type="component" value="Chromosome 5"/>
</dbReference>
<dbReference type="GO" id="GO:0005829">
    <property type="term" value="C:cytosol"/>
    <property type="evidence" value="ECO:0000318"/>
    <property type="project" value="GO_Central"/>
</dbReference>
<dbReference type="GO" id="GO:0005524">
    <property type="term" value="F:ATP binding"/>
    <property type="evidence" value="ECO:0007669"/>
    <property type="project" value="UniProtKB-KW"/>
</dbReference>
<dbReference type="GO" id="GO:0004856">
    <property type="term" value="F:D-xylulokinase activity"/>
    <property type="evidence" value="ECO:0000318"/>
    <property type="project" value="GO_Central"/>
</dbReference>
<dbReference type="GO" id="GO:0042732">
    <property type="term" value="P:D-xylose metabolic process"/>
    <property type="evidence" value="ECO:0007669"/>
    <property type="project" value="UniProtKB-KW"/>
</dbReference>
<dbReference type="GO" id="GO:0005997">
    <property type="term" value="P:xylulose metabolic process"/>
    <property type="evidence" value="ECO:0000318"/>
    <property type="project" value="GO_Central"/>
</dbReference>
<dbReference type="CDD" id="cd07776">
    <property type="entry name" value="ASKHA_NBD_FGGY_SpXK-like"/>
    <property type="match status" value="1"/>
</dbReference>
<dbReference type="FunFam" id="3.30.420.40:FF:000118">
    <property type="entry name" value="Xylulose kinase 2"/>
    <property type="match status" value="1"/>
</dbReference>
<dbReference type="Gene3D" id="3.30.420.40">
    <property type="match status" value="2"/>
</dbReference>
<dbReference type="InterPro" id="IPR043129">
    <property type="entry name" value="ATPase_NBD"/>
</dbReference>
<dbReference type="InterPro" id="IPR042024">
    <property type="entry name" value="D-XK_euk"/>
</dbReference>
<dbReference type="InterPro" id="IPR018485">
    <property type="entry name" value="FGGY_C"/>
</dbReference>
<dbReference type="InterPro" id="IPR018484">
    <property type="entry name" value="FGGY_N"/>
</dbReference>
<dbReference type="PANTHER" id="PTHR10196">
    <property type="entry name" value="SUGAR KINASE"/>
    <property type="match status" value="1"/>
</dbReference>
<dbReference type="PANTHER" id="PTHR10196:SF57">
    <property type="entry name" value="XYLULOSE KINASE"/>
    <property type="match status" value="1"/>
</dbReference>
<dbReference type="Pfam" id="PF02782">
    <property type="entry name" value="FGGY_C"/>
    <property type="match status" value="1"/>
</dbReference>
<dbReference type="Pfam" id="PF00370">
    <property type="entry name" value="FGGY_N"/>
    <property type="match status" value="1"/>
</dbReference>
<dbReference type="SUPFAM" id="SSF53067">
    <property type="entry name" value="Actin-like ATPase domain"/>
    <property type="match status" value="2"/>
</dbReference>
<protein>
    <recommendedName>
        <fullName>Probable D-xylulose kinase A</fullName>
        <shortName>Xylulokinase A</shortName>
        <ecNumber>2.7.1.17</ecNumber>
    </recommendedName>
</protein>
<gene>
    <name type="primary">xkiA</name>
    <name type="ORF">AFUA_5G09840</name>
</gene>
<keyword id="KW-0067">ATP-binding</keyword>
<keyword id="KW-0119">Carbohydrate metabolism</keyword>
<keyword id="KW-0963">Cytoplasm</keyword>
<keyword id="KW-0418">Kinase</keyword>
<keyword id="KW-0547">Nucleotide-binding</keyword>
<keyword id="KW-1185">Reference proteome</keyword>
<keyword id="KW-0808">Transferase</keyword>
<keyword id="KW-0859">Xylose metabolism</keyword>